<comment type="function">
    <text evidence="1">Catalyzes the reversible formation of acyl-phosphate (acyl-PO(4)) from acyl-[acyl-carrier-protein] (acyl-ACP). This enzyme utilizes acyl-ACP as fatty acyl donor, but not acyl-CoA.</text>
</comment>
<comment type="catalytic activity">
    <reaction evidence="1">
        <text>a fatty acyl-[ACP] + phosphate = an acyl phosphate + holo-[ACP]</text>
        <dbReference type="Rhea" id="RHEA:42292"/>
        <dbReference type="Rhea" id="RHEA-COMP:9685"/>
        <dbReference type="Rhea" id="RHEA-COMP:14125"/>
        <dbReference type="ChEBI" id="CHEBI:43474"/>
        <dbReference type="ChEBI" id="CHEBI:59918"/>
        <dbReference type="ChEBI" id="CHEBI:64479"/>
        <dbReference type="ChEBI" id="CHEBI:138651"/>
        <dbReference type="EC" id="2.3.1.274"/>
    </reaction>
</comment>
<comment type="pathway">
    <text evidence="1">Lipid metabolism; phospholipid metabolism.</text>
</comment>
<comment type="subunit">
    <text evidence="1">Homodimer. Probably interacts with PlsY.</text>
</comment>
<comment type="subcellular location">
    <subcellularLocation>
        <location evidence="1">Cytoplasm</location>
    </subcellularLocation>
    <text evidence="1">Associated with the membrane possibly through PlsY.</text>
</comment>
<comment type="similarity">
    <text evidence="1">Belongs to the PlsX family.</text>
</comment>
<comment type="sequence caution" evidence="2">
    <conflict type="erroneous initiation">
        <sequence resource="EMBL-CDS" id="AAT86204"/>
    </conflict>
</comment>
<organism>
    <name type="scientific">Streptococcus pyogenes serotype M6 (strain ATCC BAA-946 / MGAS10394)</name>
    <dbReference type="NCBI Taxonomy" id="286636"/>
    <lineage>
        <taxon>Bacteria</taxon>
        <taxon>Bacillati</taxon>
        <taxon>Bacillota</taxon>
        <taxon>Bacilli</taxon>
        <taxon>Lactobacillales</taxon>
        <taxon>Streptococcaceae</taxon>
        <taxon>Streptococcus</taxon>
    </lineage>
</organism>
<dbReference type="EC" id="2.3.1.274" evidence="1"/>
<dbReference type="EMBL" id="CP000003">
    <property type="protein sequence ID" value="AAT86204.1"/>
    <property type="status" value="ALT_INIT"/>
    <property type="molecule type" value="Genomic_DNA"/>
</dbReference>
<dbReference type="RefSeq" id="WP_011184059.1">
    <property type="nucleotide sequence ID" value="NC_006086.1"/>
</dbReference>
<dbReference type="SMR" id="Q5XEF9"/>
<dbReference type="KEGG" id="spa:M6_Spy0069"/>
<dbReference type="HOGENOM" id="CLU_039379_1_1_9"/>
<dbReference type="UniPathway" id="UPA00085"/>
<dbReference type="Proteomes" id="UP000001167">
    <property type="component" value="Chromosome"/>
</dbReference>
<dbReference type="GO" id="GO:0005737">
    <property type="term" value="C:cytoplasm"/>
    <property type="evidence" value="ECO:0007669"/>
    <property type="project" value="UniProtKB-SubCell"/>
</dbReference>
<dbReference type="GO" id="GO:0043811">
    <property type="term" value="F:phosphate:acyl-[acyl carrier protein] acyltransferase activity"/>
    <property type="evidence" value="ECO:0007669"/>
    <property type="project" value="UniProtKB-UniRule"/>
</dbReference>
<dbReference type="GO" id="GO:0006633">
    <property type="term" value="P:fatty acid biosynthetic process"/>
    <property type="evidence" value="ECO:0007669"/>
    <property type="project" value="UniProtKB-UniRule"/>
</dbReference>
<dbReference type="GO" id="GO:0008654">
    <property type="term" value="P:phospholipid biosynthetic process"/>
    <property type="evidence" value="ECO:0007669"/>
    <property type="project" value="UniProtKB-KW"/>
</dbReference>
<dbReference type="Gene3D" id="3.40.718.10">
    <property type="entry name" value="Isopropylmalate Dehydrogenase"/>
    <property type="match status" value="1"/>
</dbReference>
<dbReference type="HAMAP" id="MF_00019">
    <property type="entry name" value="PlsX"/>
    <property type="match status" value="1"/>
</dbReference>
<dbReference type="InterPro" id="IPR003664">
    <property type="entry name" value="FA_synthesis"/>
</dbReference>
<dbReference type="InterPro" id="IPR012281">
    <property type="entry name" value="Phospholipid_synth_PlsX-like"/>
</dbReference>
<dbReference type="NCBIfam" id="TIGR00182">
    <property type="entry name" value="plsX"/>
    <property type="match status" value="1"/>
</dbReference>
<dbReference type="PANTHER" id="PTHR30100">
    <property type="entry name" value="FATTY ACID/PHOSPHOLIPID SYNTHESIS PROTEIN PLSX"/>
    <property type="match status" value="1"/>
</dbReference>
<dbReference type="PANTHER" id="PTHR30100:SF1">
    <property type="entry name" value="PHOSPHATE ACYLTRANSFERASE"/>
    <property type="match status" value="1"/>
</dbReference>
<dbReference type="Pfam" id="PF02504">
    <property type="entry name" value="FA_synthesis"/>
    <property type="match status" value="1"/>
</dbReference>
<dbReference type="PIRSF" id="PIRSF002465">
    <property type="entry name" value="Phsphlp_syn_PlsX"/>
    <property type="match status" value="1"/>
</dbReference>
<dbReference type="SUPFAM" id="SSF53659">
    <property type="entry name" value="Isocitrate/Isopropylmalate dehydrogenase-like"/>
    <property type="match status" value="1"/>
</dbReference>
<keyword id="KW-0963">Cytoplasm</keyword>
<keyword id="KW-0444">Lipid biosynthesis</keyword>
<keyword id="KW-0443">Lipid metabolism</keyword>
<keyword id="KW-0594">Phospholipid biosynthesis</keyword>
<keyword id="KW-1208">Phospholipid metabolism</keyword>
<keyword id="KW-0808">Transferase</keyword>
<reference key="1">
    <citation type="journal article" date="2004" name="J. Infect. Dis.">
        <title>Progress toward characterization of the group A Streptococcus metagenome: complete genome sequence of a macrolide-resistant serotype M6 strain.</title>
        <authorList>
            <person name="Banks D.J."/>
            <person name="Porcella S.F."/>
            <person name="Barbian K.D."/>
            <person name="Beres S.B."/>
            <person name="Philips L.E."/>
            <person name="Voyich J.M."/>
            <person name="DeLeo F.R."/>
            <person name="Martin J.M."/>
            <person name="Somerville G.A."/>
            <person name="Musser J.M."/>
        </authorList>
    </citation>
    <scope>NUCLEOTIDE SEQUENCE [LARGE SCALE GENOMIC DNA]</scope>
    <source>
        <strain>ATCC BAA-946 / MGAS10394</strain>
    </source>
</reference>
<proteinExistence type="inferred from homology"/>
<sequence length="335" mass="35539">MKRIAIDAMGGDNAPKAIVEGVNQVIEAFSDIEIQLYGDQTKINSYLIQSDRVAIIHTDEKIMSDDEPAKAVRRKKKASMVLAAKAVKEGKADAIISAGNTGALLAVGLFVVGRIKGVDRPGLLSTIPTVTGLGFDMLDLGANAENTVKHLHQYAILGSFYAKNVRGIANPRVGLLNNGTEETKGDPLRKATYELLTADNTISFVGNVEARELMSGVADVIVSDGFTGNAVLKSIEGTGISIMGQLKQIINSGGIKTKIGASLLKSSLYEMKKTLDYSSAGGAVLFGLKAPVVKSHGSSDVKAIFSTIKQVRTMLDTNVVGQLVEEFAKETQVND</sequence>
<feature type="chain" id="PRO_0000189950" description="Phosphate acyltransferase">
    <location>
        <begin position="1"/>
        <end position="335"/>
    </location>
</feature>
<accession>Q5XEF9</accession>
<evidence type="ECO:0000255" key="1">
    <source>
        <dbReference type="HAMAP-Rule" id="MF_00019"/>
    </source>
</evidence>
<evidence type="ECO:0000305" key="2"/>
<name>PLSX_STRP6</name>
<gene>
    <name evidence="1" type="primary">plsX</name>
    <name type="ordered locus">M6_Spy0069</name>
</gene>
<protein>
    <recommendedName>
        <fullName evidence="1">Phosphate acyltransferase</fullName>
        <ecNumber evidence="1">2.3.1.274</ecNumber>
    </recommendedName>
    <alternativeName>
        <fullName evidence="1">Acyl-ACP phosphotransacylase</fullName>
    </alternativeName>
    <alternativeName>
        <fullName evidence="1">Acyl-[acyl-carrier-protein]--phosphate acyltransferase</fullName>
    </alternativeName>
    <alternativeName>
        <fullName evidence="1">Phosphate-acyl-ACP acyltransferase</fullName>
    </alternativeName>
</protein>